<gene>
    <name evidence="1" type="primary">mtnB</name>
    <name type="ordered locus">BCE33L3795</name>
</gene>
<proteinExistence type="inferred from homology"/>
<keyword id="KW-0028">Amino-acid biosynthesis</keyword>
<keyword id="KW-0456">Lyase</keyword>
<keyword id="KW-0479">Metal-binding</keyword>
<keyword id="KW-0486">Methionine biosynthesis</keyword>
<keyword id="KW-0862">Zinc</keyword>
<dbReference type="EC" id="4.2.1.109" evidence="1"/>
<dbReference type="EMBL" id="CP000001">
    <property type="protein sequence ID" value="AAU16472.1"/>
    <property type="molecule type" value="Genomic_DNA"/>
</dbReference>
<dbReference type="RefSeq" id="WP_000811324.1">
    <property type="nucleotide sequence ID" value="NC_006274.1"/>
</dbReference>
<dbReference type="SMR" id="Q635P1"/>
<dbReference type="KEGG" id="bcz:BCE33L3795"/>
<dbReference type="PATRIC" id="fig|288681.22.peg.1608"/>
<dbReference type="UniPathway" id="UPA00904">
    <property type="reaction ID" value="UER00875"/>
</dbReference>
<dbReference type="Proteomes" id="UP000002612">
    <property type="component" value="Chromosome"/>
</dbReference>
<dbReference type="GO" id="GO:0005737">
    <property type="term" value="C:cytoplasm"/>
    <property type="evidence" value="ECO:0007669"/>
    <property type="project" value="InterPro"/>
</dbReference>
<dbReference type="GO" id="GO:0046570">
    <property type="term" value="F:methylthioribulose 1-phosphate dehydratase activity"/>
    <property type="evidence" value="ECO:0007669"/>
    <property type="project" value="UniProtKB-UniRule"/>
</dbReference>
<dbReference type="GO" id="GO:0008270">
    <property type="term" value="F:zinc ion binding"/>
    <property type="evidence" value="ECO:0007669"/>
    <property type="project" value="UniProtKB-UniRule"/>
</dbReference>
<dbReference type="GO" id="GO:0019509">
    <property type="term" value="P:L-methionine salvage from methylthioadenosine"/>
    <property type="evidence" value="ECO:0007669"/>
    <property type="project" value="UniProtKB-UniRule"/>
</dbReference>
<dbReference type="FunFam" id="3.40.225.10:FF:000007">
    <property type="entry name" value="Methylthioribulose-1-phosphate dehydratase"/>
    <property type="match status" value="1"/>
</dbReference>
<dbReference type="Gene3D" id="3.40.225.10">
    <property type="entry name" value="Class II aldolase/adducin N-terminal domain"/>
    <property type="match status" value="1"/>
</dbReference>
<dbReference type="HAMAP" id="MF_01677">
    <property type="entry name" value="Salvage_MtnB"/>
    <property type="match status" value="1"/>
</dbReference>
<dbReference type="InterPro" id="IPR001303">
    <property type="entry name" value="Aldolase_II/adducin_N"/>
</dbReference>
<dbReference type="InterPro" id="IPR036409">
    <property type="entry name" value="Aldolase_II/adducin_N_sf"/>
</dbReference>
<dbReference type="InterPro" id="IPR017714">
    <property type="entry name" value="MethylthioRu-1-P_deHdtase_MtnB"/>
</dbReference>
<dbReference type="NCBIfam" id="NF005244">
    <property type="entry name" value="PRK06754.1"/>
    <property type="match status" value="1"/>
</dbReference>
<dbReference type="NCBIfam" id="TIGR03328">
    <property type="entry name" value="salvage_mtnB"/>
    <property type="match status" value="1"/>
</dbReference>
<dbReference type="PANTHER" id="PTHR10640">
    <property type="entry name" value="METHYLTHIORIBULOSE-1-PHOSPHATE DEHYDRATASE"/>
    <property type="match status" value="1"/>
</dbReference>
<dbReference type="PANTHER" id="PTHR10640:SF7">
    <property type="entry name" value="METHYLTHIORIBULOSE-1-PHOSPHATE DEHYDRATASE"/>
    <property type="match status" value="1"/>
</dbReference>
<dbReference type="Pfam" id="PF00596">
    <property type="entry name" value="Aldolase_II"/>
    <property type="match status" value="1"/>
</dbReference>
<dbReference type="SMART" id="SM01007">
    <property type="entry name" value="Aldolase_II"/>
    <property type="match status" value="1"/>
</dbReference>
<dbReference type="SUPFAM" id="SSF53639">
    <property type="entry name" value="AraD/HMP-PK domain-like"/>
    <property type="match status" value="1"/>
</dbReference>
<accession>Q635P1</accession>
<feature type="chain" id="PRO_0000357066" description="Methylthioribulose-1-phosphate dehydratase">
    <location>
        <begin position="1"/>
        <end position="212"/>
    </location>
</feature>
<feature type="binding site" evidence="1">
    <location>
        <position position="97"/>
    </location>
    <ligand>
        <name>Zn(2+)</name>
        <dbReference type="ChEBI" id="CHEBI:29105"/>
    </ligand>
</feature>
<feature type="binding site" evidence="1">
    <location>
        <position position="99"/>
    </location>
    <ligand>
        <name>Zn(2+)</name>
        <dbReference type="ChEBI" id="CHEBI:29105"/>
    </ligand>
</feature>
<comment type="function">
    <text evidence="1">Catalyzes the dehydration of methylthioribulose-1-phosphate (MTRu-1-P) into 2,3-diketo-5-methylthiopentyl-1-phosphate (DK-MTP-1-P).</text>
</comment>
<comment type="catalytic activity">
    <reaction evidence="1">
        <text>5-(methylsulfanyl)-D-ribulose 1-phosphate = 5-methylsulfanyl-2,3-dioxopentyl phosphate + H2O</text>
        <dbReference type="Rhea" id="RHEA:15549"/>
        <dbReference type="ChEBI" id="CHEBI:15377"/>
        <dbReference type="ChEBI" id="CHEBI:58548"/>
        <dbReference type="ChEBI" id="CHEBI:58828"/>
        <dbReference type="EC" id="4.2.1.109"/>
    </reaction>
</comment>
<comment type="cofactor">
    <cofactor evidence="1">
        <name>Zn(2+)</name>
        <dbReference type="ChEBI" id="CHEBI:29105"/>
    </cofactor>
    <text evidence="1">Binds 1 zinc ion per subunit.</text>
</comment>
<comment type="pathway">
    <text evidence="1">Amino-acid biosynthesis; L-methionine biosynthesis via salvage pathway; L-methionine from S-methyl-5-thio-alpha-D-ribose 1-phosphate: step 2/6.</text>
</comment>
<comment type="subunit">
    <text evidence="1">Homotetramer.</text>
</comment>
<comment type="similarity">
    <text evidence="1">Belongs to the aldolase class II family. MtnB subfamily.</text>
</comment>
<protein>
    <recommendedName>
        <fullName evidence="1">Methylthioribulose-1-phosphate dehydratase</fullName>
        <shortName evidence="1">MTRu-1-P dehydratase</shortName>
        <ecNumber evidence="1">4.2.1.109</ecNumber>
    </recommendedName>
</protein>
<organism>
    <name type="scientific">Bacillus cereus (strain ZK / E33L)</name>
    <dbReference type="NCBI Taxonomy" id="288681"/>
    <lineage>
        <taxon>Bacteria</taxon>
        <taxon>Bacillati</taxon>
        <taxon>Bacillota</taxon>
        <taxon>Bacilli</taxon>
        <taxon>Bacillales</taxon>
        <taxon>Bacillaceae</taxon>
        <taxon>Bacillus</taxon>
        <taxon>Bacillus cereus group</taxon>
    </lineage>
</organism>
<evidence type="ECO:0000255" key="1">
    <source>
        <dbReference type="HAMAP-Rule" id="MF_01677"/>
    </source>
</evidence>
<name>MTNB_BACCZ</name>
<sequence length="212" mass="23925">MKQLFRQWYDLSEIKKELTTRNWFPATSGNISIKVSHEPLTFLITASGKDKTKTTPDDFLLVDHLGVPVLETELRPSAETILHTHIYNNTNAGCVLHIHTTDNNVITNLYSDAVTLQNQEIIKALDIWEEGATIHIPIIENHAHIPTLGENFRKHIQGDSGAVLIRNHGITVWGRDSFDAKKRLEAYEFLFQFHIKLLSIQGGVSNGANSYS</sequence>
<reference key="1">
    <citation type="journal article" date="2006" name="J. Bacteriol.">
        <title>Pathogenomic sequence analysis of Bacillus cereus and Bacillus thuringiensis isolates closely related to Bacillus anthracis.</title>
        <authorList>
            <person name="Han C.S."/>
            <person name="Xie G."/>
            <person name="Challacombe J.F."/>
            <person name="Altherr M.R."/>
            <person name="Bhotika S.S."/>
            <person name="Bruce D."/>
            <person name="Campbell C.S."/>
            <person name="Campbell M.L."/>
            <person name="Chen J."/>
            <person name="Chertkov O."/>
            <person name="Cleland C."/>
            <person name="Dimitrijevic M."/>
            <person name="Doggett N.A."/>
            <person name="Fawcett J.J."/>
            <person name="Glavina T."/>
            <person name="Goodwin L.A."/>
            <person name="Hill K.K."/>
            <person name="Hitchcock P."/>
            <person name="Jackson P.J."/>
            <person name="Keim P."/>
            <person name="Kewalramani A.R."/>
            <person name="Longmire J."/>
            <person name="Lucas S."/>
            <person name="Malfatti S."/>
            <person name="McMurry K."/>
            <person name="Meincke L.J."/>
            <person name="Misra M."/>
            <person name="Moseman B.L."/>
            <person name="Mundt M."/>
            <person name="Munk A.C."/>
            <person name="Okinaka R.T."/>
            <person name="Parson-Quintana B."/>
            <person name="Reilly L.P."/>
            <person name="Richardson P."/>
            <person name="Robinson D.L."/>
            <person name="Rubin E."/>
            <person name="Saunders E."/>
            <person name="Tapia R."/>
            <person name="Tesmer J.G."/>
            <person name="Thayer N."/>
            <person name="Thompson L.S."/>
            <person name="Tice H."/>
            <person name="Ticknor L.O."/>
            <person name="Wills P.L."/>
            <person name="Brettin T.S."/>
            <person name="Gilna P."/>
        </authorList>
    </citation>
    <scope>NUCLEOTIDE SEQUENCE [LARGE SCALE GENOMIC DNA]</scope>
    <source>
        <strain>ZK / E33L</strain>
    </source>
</reference>